<accession>A4Y8X6</accession>
<reference key="1">
    <citation type="submission" date="2007-04" db="EMBL/GenBank/DDBJ databases">
        <title>Complete sequence of Shewanella putrefaciens CN-32.</title>
        <authorList>
            <consortium name="US DOE Joint Genome Institute"/>
            <person name="Copeland A."/>
            <person name="Lucas S."/>
            <person name="Lapidus A."/>
            <person name="Barry K."/>
            <person name="Detter J.C."/>
            <person name="Glavina del Rio T."/>
            <person name="Hammon N."/>
            <person name="Israni S."/>
            <person name="Dalin E."/>
            <person name="Tice H."/>
            <person name="Pitluck S."/>
            <person name="Chain P."/>
            <person name="Malfatti S."/>
            <person name="Shin M."/>
            <person name="Vergez L."/>
            <person name="Schmutz J."/>
            <person name="Larimer F."/>
            <person name="Land M."/>
            <person name="Hauser L."/>
            <person name="Kyrpides N."/>
            <person name="Mikhailova N."/>
            <person name="Romine M.F."/>
            <person name="Fredrickson J."/>
            <person name="Tiedje J."/>
            <person name="Richardson P."/>
        </authorList>
    </citation>
    <scope>NUCLEOTIDE SEQUENCE [LARGE SCALE GENOMIC DNA]</scope>
    <source>
        <strain>CN-32 / ATCC BAA-453</strain>
    </source>
</reference>
<protein>
    <recommendedName>
        <fullName evidence="1">UPF0235 protein Sputcn32_2690</fullName>
    </recommendedName>
</protein>
<evidence type="ECO:0000255" key="1">
    <source>
        <dbReference type="HAMAP-Rule" id="MF_00634"/>
    </source>
</evidence>
<sequence>MSAVVQQQGDLLLNVYIQPKASRDQIVGLHGDELKVAITAPPIDGKANAHLSKYLAKAFKVPKSDVYIIKGELGRHKQIRIVTPKLIPPEVSELLE</sequence>
<proteinExistence type="inferred from homology"/>
<dbReference type="EMBL" id="CP000681">
    <property type="protein sequence ID" value="ABP76409.1"/>
    <property type="molecule type" value="Genomic_DNA"/>
</dbReference>
<dbReference type="SMR" id="A4Y8X6"/>
<dbReference type="STRING" id="319224.Sputcn32_2690"/>
<dbReference type="KEGG" id="spc:Sputcn32_2690"/>
<dbReference type="eggNOG" id="COG1872">
    <property type="taxonomic scope" value="Bacteria"/>
</dbReference>
<dbReference type="HOGENOM" id="CLU_130694_5_0_6"/>
<dbReference type="GO" id="GO:0005737">
    <property type="term" value="C:cytoplasm"/>
    <property type="evidence" value="ECO:0007669"/>
    <property type="project" value="TreeGrafter"/>
</dbReference>
<dbReference type="Gene3D" id="3.30.1200.10">
    <property type="entry name" value="YggU-like"/>
    <property type="match status" value="1"/>
</dbReference>
<dbReference type="HAMAP" id="MF_00634">
    <property type="entry name" value="UPF0235"/>
    <property type="match status" value="1"/>
</dbReference>
<dbReference type="InterPro" id="IPR003746">
    <property type="entry name" value="DUF167"/>
</dbReference>
<dbReference type="InterPro" id="IPR036591">
    <property type="entry name" value="YggU-like_sf"/>
</dbReference>
<dbReference type="NCBIfam" id="TIGR00251">
    <property type="entry name" value="DUF167 family protein"/>
    <property type="match status" value="1"/>
</dbReference>
<dbReference type="NCBIfam" id="NF003466">
    <property type="entry name" value="PRK05090.1"/>
    <property type="match status" value="1"/>
</dbReference>
<dbReference type="PANTHER" id="PTHR13420">
    <property type="entry name" value="UPF0235 PROTEIN C15ORF40"/>
    <property type="match status" value="1"/>
</dbReference>
<dbReference type="PANTHER" id="PTHR13420:SF7">
    <property type="entry name" value="UPF0235 PROTEIN C15ORF40"/>
    <property type="match status" value="1"/>
</dbReference>
<dbReference type="Pfam" id="PF02594">
    <property type="entry name" value="DUF167"/>
    <property type="match status" value="1"/>
</dbReference>
<dbReference type="SMART" id="SM01152">
    <property type="entry name" value="DUF167"/>
    <property type="match status" value="1"/>
</dbReference>
<dbReference type="SUPFAM" id="SSF69786">
    <property type="entry name" value="YggU-like"/>
    <property type="match status" value="1"/>
</dbReference>
<organism>
    <name type="scientific">Shewanella putrefaciens (strain CN-32 / ATCC BAA-453)</name>
    <dbReference type="NCBI Taxonomy" id="319224"/>
    <lineage>
        <taxon>Bacteria</taxon>
        <taxon>Pseudomonadati</taxon>
        <taxon>Pseudomonadota</taxon>
        <taxon>Gammaproteobacteria</taxon>
        <taxon>Alteromonadales</taxon>
        <taxon>Shewanellaceae</taxon>
        <taxon>Shewanella</taxon>
    </lineage>
</organism>
<comment type="similarity">
    <text evidence="1">Belongs to the UPF0235 family.</text>
</comment>
<feature type="chain" id="PRO_1000056790" description="UPF0235 protein Sputcn32_2690">
    <location>
        <begin position="1"/>
        <end position="96"/>
    </location>
</feature>
<gene>
    <name type="ordered locus">Sputcn32_2690</name>
</gene>
<name>Y2690_SHEPC</name>